<gene>
    <name evidence="1" type="primary">trpD</name>
    <name type="ordered locus">PTO0344</name>
</gene>
<dbReference type="EC" id="2.4.2.18" evidence="1"/>
<dbReference type="EMBL" id="AE017261">
    <property type="protein sequence ID" value="AAT42929.1"/>
    <property type="molecule type" value="Genomic_DNA"/>
</dbReference>
<dbReference type="RefSeq" id="WP_011177145.1">
    <property type="nucleotide sequence ID" value="NC_005877.1"/>
</dbReference>
<dbReference type="SMR" id="Q6L273"/>
<dbReference type="FunCoup" id="Q6L273">
    <property type="interactions" value="105"/>
</dbReference>
<dbReference type="STRING" id="263820.PTO0344"/>
<dbReference type="PaxDb" id="263820-PTO0344"/>
<dbReference type="GeneID" id="2843949"/>
<dbReference type="KEGG" id="pto:PTO0344"/>
<dbReference type="PATRIC" id="fig|263820.9.peg.366"/>
<dbReference type="eggNOG" id="arCOG02012">
    <property type="taxonomic scope" value="Archaea"/>
</dbReference>
<dbReference type="HOGENOM" id="CLU_034315_3_1_2"/>
<dbReference type="InParanoid" id="Q6L273"/>
<dbReference type="OrthoDB" id="8214at2157"/>
<dbReference type="UniPathway" id="UPA00035">
    <property type="reaction ID" value="UER00041"/>
</dbReference>
<dbReference type="Proteomes" id="UP000000438">
    <property type="component" value="Chromosome"/>
</dbReference>
<dbReference type="GO" id="GO:0005829">
    <property type="term" value="C:cytosol"/>
    <property type="evidence" value="ECO:0007669"/>
    <property type="project" value="TreeGrafter"/>
</dbReference>
<dbReference type="GO" id="GO:0004048">
    <property type="term" value="F:anthranilate phosphoribosyltransferase activity"/>
    <property type="evidence" value="ECO:0007669"/>
    <property type="project" value="UniProtKB-UniRule"/>
</dbReference>
<dbReference type="GO" id="GO:0000287">
    <property type="term" value="F:magnesium ion binding"/>
    <property type="evidence" value="ECO:0007669"/>
    <property type="project" value="UniProtKB-UniRule"/>
</dbReference>
<dbReference type="GO" id="GO:0000162">
    <property type="term" value="P:L-tryptophan biosynthetic process"/>
    <property type="evidence" value="ECO:0007669"/>
    <property type="project" value="UniProtKB-UniRule"/>
</dbReference>
<dbReference type="Gene3D" id="3.40.1030.10">
    <property type="entry name" value="Nucleoside phosphorylase/phosphoribosyltransferase catalytic domain"/>
    <property type="match status" value="1"/>
</dbReference>
<dbReference type="Gene3D" id="1.20.970.10">
    <property type="entry name" value="Transferase, Pyrimidine Nucleoside Phosphorylase, Chain C"/>
    <property type="match status" value="1"/>
</dbReference>
<dbReference type="HAMAP" id="MF_00211">
    <property type="entry name" value="TrpD"/>
    <property type="match status" value="1"/>
</dbReference>
<dbReference type="InterPro" id="IPR005940">
    <property type="entry name" value="Anthranilate_Pribosyl_Tfrase"/>
</dbReference>
<dbReference type="InterPro" id="IPR000312">
    <property type="entry name" value="Glycosyl_Trfase_fam3"/>
</dbReference>
<dbReference type="InterPro" id="IPR017459">
    <property type="entry name" value="Glycosyl_Trfase_fam3_N_dom"/>
</dbReference>
<dbReference type="InterPro" id="IPR036320">
    <property type="entry name" value="Glycosyl_Trfase_fam3_N_dom_sf"/>
</dbReference>
<dbReference type="InterPro" id="IPR035902">
    <property type="entry name" value="Nuc_phospho_transferase"/>
</dbReference>
<dbReference type="NCBIfam" id="TIGR01245">
    <property type="entry name" value="trpD"/>
    <property type="match status" value="1"/>
</dbReference>
<dbReference type="PANTHER" id="PTHR43285">
    <property type="entry name" value="ANTHRANILATE PHOSPHORIBOSYLTRANSFERASE"/>
    <property type="match status" value="1"/>
</dbReference>
<dbReference type="PANTHER" id="PTHR43285:SF2">
    <property type="entry name" value="ANTHRANILATE PHOSPHORIBOSYLTRANSFERASE"/>
    <property type="match status" value="1"/>
</dbReference>
<dbReference type="Pfam" id="PF02885">
    <property type="entry name" value="Glycos_trans_3N"/>
    <property type="match status" value="1"/>
</dbReference>
<dbReference type="Pfam" id="PF00591">
    <property type="entry name" value="Glycos_transf_3"/>
    <property type="match status" value="1"/>
</dbReference>
<dbReference type="SUPFAM" id="SSF52418">
    <property type="entry name" value="Nucleoside phosphorylase/phosphoribosyltransferase catalytic domain"/>
    <property type="match status" value="1"/>
</dbReference>
<dbReference type="SUPFAM" id="SSF47648">
    <property type="entry name" value="Nucleoside phosphorylase/phosphoribosyltransferase N-terminal domain"/>
    <property type="match status" value="1"/>
</dbReference>
<protein>
    <recommendedName>
        <fullName evidence="1">Anthranilate phosphoribosyltransferase</fullName>
        <ecNumber evidence="1">2.4.2.18</ecNumber>
    </recommendedName>
</protein>
<name>TRPD_PICTO</name>
<evidence type="ECO:0000255" key="1">
    <source>
        <dbReference type="HAMAP-Rule" id="MF_00211"/>
    </source>
</evidence>
<sequence length="324" mass="36020">MLNLDFIYENRNMSESEAELCMINIIDAPDTVKAAFLTALYVKGITPDELSGFSRALRKLSSISINIDKLTDIVGTGGDHKNTINVSTAASILLSLRIKIAKHGNFGITGSHGSADFMKFIGYKFEMTEYDIIKNLNEKNYVYILAPVYNKTFAKFSNVRKKLGIKTVFNILGPLTNPLNPENLVIGAYDDETAETYASVMLKQNKRAFIVSSTMDEISPEAESHVYYVNNAIRKFDLDPLSITGKRINESNIIEKDPVKSFNIIIDAFKNKNRDAASFIALNAAPALVLNGISRDITSAYDLCINDIESGAAYERLRRISNED</sequence>
<organism>
    <name type="scientific">Picrophilus torridus (strain ATCC 700027 / DSM 9790 / JCM 10055 / NBRC 100828 / KAW 2/3)</name>
    <dbReference type="NCBI Taxonomy" id="1122961"/>
    <lineage>
        <taxon>Archaea</taxon>
        <taxon>Methanobacteriati</taxon>
        <taxon>Thermoplasmatota</taxon>
        <taxon>Thermoplasmata</taxon>
        <taxon>Thermoplasmatales</taxon>
        <taxon>Picrophilaceae</taxon>
        <taxon>Picrophilus</taxon>
    </lineage>
</organism>
<comment type="function">
    <text evidence="1">Catalyzes the transfer of the phosphoribosyl group of 5-phosphorylribose-1-pyrophosphate (PRPP) to anthranilate to yield N-(5'-phosphoribosyl)-anthranilate (PRA).</text>
</comment>
<comment type="catalytic activity">
    <reaction evidence="1">
        <text>N-(5-phospho-beta-D-ribosyl)anthranilate + diphosphate = 5-phospho-alpha-D-ribose 1-diphosphate + anthranilate</text>
        <dbReference type="Rhea" id="RHEA:11768"/>
        <dbReference type="ChEBI" id="CHEBI:16567"/>
        <dbReference type="ChEBI" id="CHEBI:18277"/>
        <dbReference type="ChEBI" id="CHEBI:33019"/>
        <dbReference type="ChEBI" id="CHEBI:58017"/>
        <dbReference type="EC" id="2.4.2.18"/>
    </reaction>
</comment>
<comment type="cofactor">
    <cofactor evidence="1">
        <name>Mg(2+)</name>
        <dbReference type="ChEBI" id="CHEBI:18420"/>
    </cofactor>
    <text evidence="1">Binds 2 magnesium ions per monomer.</text>
</comment>
<comment type="pathway">
    <text evidence="1">Amino-acid biosynthesis; L-tryptophan biosynthesis; L-tryptophan from chorismate: step 2/5.</text>
</comment>
<comment type="subunit">
    <text evidence="1">Homodimer.</text>
</comment>
<comment type="similarity">
    <text evidence="1">Belongs to the anthranilate phosphoribosyltransferase family.</text>
</comment>
<reference key="1">
    <citation type="journal article" date="2004" name="Proc. Natl. Acad. Sci. U.S.A.">
        <title>Genome sequence of Picrophilus torridus and its implications for life around pH 0.</title>
        <authorList>
            <person name="Fuetterer O."/>
            <person name="Angelov A."/>
            <person name="Liesegang H."/>
            <person name="Gottschalk G."/>
            <person name="Schleper C."/>
            <person name="Schepers B."/>
            <person name="Dock C."/>
            <person name="Antranikian G."/>
            <person name="Liebl W."/>
        </authorList>
    </citation>
    <scope>NUCLEOTIDE SEQUENCE [LARGE SCALE GENOMIC DNA]</scope>
    <source>
        <strain>ATCC 700027 / DSM 9790 / JCM 10055 / NBRC 100828 / KAW 2/3</strain>
    </source>
</reference>
<proteinExistence type="inferred from homology"/>
<keyword id="KW-0028">Amino-acid biosynthesis</keyword>
<keyword id="KW-0057">Aromatic amino acid biosynthesis</keyword>
<keyword id="KW-0328">Glycosyltransferase</keyword>
<keyword id="KW-0460">Magnesium</keyword>
<keyword id="KW-0479">Metal-binding</keyword>
<keyword id="KW-0808">Transferase</keyword>
<keyword id="KW-0822">Tryptophan biosynthesis</keyword>
<feature type="chain" id="PRO_0000154517" description="Anthranilate phosphoribosyltransferase">
    <location>
        <begin position="1"/>
        <end position="324"/>
    </location>
</feature>
<feature type="binding site" evidence="1">
    <location>
        <position position="75"/>
    </location>
    <ligand>
        <name>5-phospho-alpha-D-ribose 1-diphosphate</name>
        <dbReference type="ChEBI" id="CHEBI:58017"/>
    </ligand>
</feature>
<feature type="binding site" evidence="1">
    <location>
        <position position="75"/>
    </location>
    <ligand>
        <name>anthranilate</name>
        <dbReference type="ChEBI" id="CHEBI:16567"/>
        <label>1</label>
    </ligand>
</feature>
<feature type="binding site" evidence="1">
    <location>
        <begin position="78"/>
        <end position="79"/>
    </location>
    <ligand>
        <name>5-phospho-alpha-D-ribose 1-diphosphate</name>
        <dbReference type="ChEBI" id="CHEBI:58017"/>
    </ligand>
</feature>
<feature type="binding site" evidence="1">
    <location>
        <position position="83"/>
    </location>
    <ligand>
        <name>5-phospho-alpha-D-ribose 1-diphosphate</name>
        <dbReference type="ChEBI" id="CHEBI:58017"/>
    </ligand>
</feature>
<feature type="binding site" evidence="1">
    <location>
        <begin position="85"/>
        <end position="88"/>
    </location>
    <ligand>
        <name>5-phospho-alpha-D-ribose 1-diphosphate</name>
        <dbReference type="ChEBI" id="CHEBI:58017"/>
    </ligand>
</feature>
<feature type="binding site" evidence="1">
    <location>
        <position position="87"/>
    </location>
    <ligand>
        <name>Mg(2+)</name>
        <dbReference type="ChEBI" id="CHEBI:18420"/>
        <label>1</label>
    </ligand>
</feature>
<feature type="binding site" evidence="1">
    <location>
        <begin position="102"/>
        <end position="110"/>
    </location>
    <ligand>
        <name>5-phospho-alpha-D-ribose 1-diphosphate</name>
        <dbReference type="ChEBI" id="CHEBI:58017"/>
    </ligand>
</feature>
<feature type="binding site" evidence="1">
    <location>
        <position position="105"/>
    </location>
    <ligand>
        <name>anthranilate</name>
        <dbReference type="ChEBI" id="CHEBI:16567"/>
        <label>1</label>
    </ligand>
</feature>
<feature type="binding site" evidence="1">
    <location>
        <position position="114"/>
    </location>
    <ligand>
        <name>5-phospho-alpha-D-ribose 1-diphosphate</name>
        <dbReference type="ChEBI" id="CHEBI:58017"/>
    </ligand>
</feature>
<feature type="binding site" evidence="1">
    <location>
        <position position="160"/>
    </location>
    <ligand>
        <name>anthranilate</name>
        <dbReference type="ChEBI" id="CHEBI:16567"/>
        <label>2</label>
    </ligand>
</feature>
<feature type="binding site" evidence="1">
    <location>
        <position position="216"/>
    </location>
    <ligand>
        <name>Mg(2+)</name>
        <dbReference type="ChEBI" id="CHEBI:18420"/>
        <label>2</label>
    </ligand>
</feature>
<feature type="binding site" evidence="1">
    <location>
        <position position="217"/>
    </location>
    <ligand>
        <name>Mg(2+)</name>
        <dbReference type="ChEBI" id="CHEBI:18420"/>
        <label>1</label>
    </ligand>
</feature>
<feature type="binding site" evidence="1">
    <location>
        <position position="217"/>
    </location>
    <ligand>
        <name>Mg(2+)</name>
        <dbReference type="ChEBI" id="CHEBI:18420"/>
        <label>2</label>
    </ligand>
</feature>
<accession>Q6L273</accession>